<reference key="1">
    <citation type="journal article" date="2007" name="Proc. Natl. Acad. Sci. U.S.A.">
        <title>Genome and proteome of long-chain alkane degrading Geobacillus thermodenitrificans NG80-2 isolated from a deep-subsurface oil reservoir.</title>
        <authorList>
            <person name="Feng L."/>
            <person name="Wang W."/>
            <person name="Cheng J."/>
            <person name="Ren Y."/>
            <person name="Zhao G."/>
            <person name="Gao C."/>
            <person name="Tang Y."/>
            <person name="Liu X."/>
            <person name="Han W."/>
            <person name="Peng X."/>
            <person name="Liu R."/>
            <person name="Wang L."/>
        </authorList>
    </citation>
    <scope>NUCLEOTIDE SEQUENCE [LARGE SCALE GENOMIC DNA]</scope>
    <source>
        <strain>NG80-2</strain>
    </source>
</reference>
<dbReference type="EMBL" id="CP000557">
    <property type="protein sequence ID" value="ABO65483.1"/>
    <property type="molecule type" value="Genomic_DNA"/>
</dbReference>
<dbReference type="SMR" id="A4IJH9"/>
<dbReference type="KEGG" id="gtn:GTNG_0096"/>
<dbReference type="eggNOG" id="COG0222">
    <property type="taxonomic scope" value="Bacteria"/>
</dbReference>
<dbReference type="HOGENOM" id="CLU_086499_3_2_9"/>
<dbReference type="Proteomes" id="UP000001578">
    <property type="component" value="Chromosome"/>
</dbReference>
<dbReference type="GO" id="GO:0022625">
    <property type="term" value="C:cytosolic large ribosomal subunit"/>
    <property type="evidence" value="ECO:0007669"/>
    <property type="project" value="TreeGrafter"/>
</dbReference>
<dbReference type="GO" id="GO:0003729">
    <property type="term" value="F:mRNA binding"/>
    <property type="evidence" value="ECO:0007669"/>
    <property type="project" value="TreeGrafter"/>
</dbReference>
<dbReference type="GO" id="GO:0003735">
    <property type="term" value="F:structural constituent of ribosome"/>
    <property type="evidence" value="ECO:0007669"/>
    <property type="project" value="InterPro"/>
</dbReference>
<dbReference type="GO" id="GO:0006412">
    <property type="term" value="P:translation"/>
    <property type="evidence" value="ECO:0007669"/>
    <property type="project" value="UniProtKB-UniRule"/>
</dbReference>
<dbReference type="CDD" id="cd00387">
    <property type="entry name" value="Ribosomal_L7_L12"/>
    <property type="match status" value="1"/>
</dbReference>
<dbReference type="FunFam" id="1.20.5.710:FF:000002">
    <property type="entry name" value="50S ribosomal protein L7/L12"/>
    <property type="match status" value="1"/>
</dbReference>
<dbReference type="FunFam" id="3.30.1390.10:FF:000001">
    <property type="entry name" value="50S ribosomal protein L7/L12"/>
    <property type="match status" value="1"/>
</dbReference>
<dbReference type="Gene3D" id="3.30.1390.10">
    <property type="match status" value="1"/>
</dbReference>
<dbReference type="Gene3D" id="1.20.5.710">
    <property type="entry name" value="Single helix bin"/>
    <property type="match status" value="1"/>
</dbReference>
<dbReference type="HAMAP" id="MF_00368">
    <property type="entry name" value="Ribosomal_bL12"/>
    <property type="match status" value="1"/>
</dbReference>
<dbReference type="InterPro" id="IPR000206">
    <property type="entry name" value="Ribosomal_bL12"/>
</dbReference>
<dbReference type="InterPro" id="IPR013823">
    <property type="entry name" value="Ribosomal_bL12_C"/>
</dbReference>
<dbReference type="InterPro" id="IPR014719">
    <property type="entry name" value="Ribosomal_bL12_C/ClpS-like"/>
</dbReference>
<dbReference type="InterPro" id="IPR008932">
    <property type="entry name" value="Ribosomal_bL12_oligo"/>
</dbReference>
<dbReference type="InterPro" id="IPR036235">
    <property type="entry name" value="Ribosomal_bL12_oligo_N_sf"/>
</dbReference>
<dbReference type="NCBIfam" id="TIGR00855">
    <property type="entry name" value="L12"/>
    <property type="match status" value="1"/>
</dbReference>
<dbReference type="PANTHER" id="PTHR45987">
    <property type="entry name" value="39S RIBOSOMAL PROTEIN L12"/>
    <property type="match status" value="1"/>
</dbReference>
<dbReference type="PANTHER" id="PTHR45987:SF4">
    <property type="entry name" value="LARGE RIBOSOMAL SUBUNIT PROTEIN BL12M"/>
    <property type="match status" value="1"/>
</dbReference>
<dbReference type="Pfam" id="PF00542">
    <property type="entry name" value="Ribosomal_L12"/>
    <property type="match status" value="1"/>
</dbReference>
<dbReference type="Pfam" id="PF16320">
    <property type="entry name" value="Ribosomal_L12_N"/>
    <property type="match status" value="1"/>
</dbReference>
<dbReference type="SUPFAM" id="SSF54736">
    <property type="entry name" value="ClpS-like"/>
    <property type="match status" value="1"/>
</dbReference>
<dbReference type="SUPFAM" id="SSF48300">
    <property type="entry name" value="Ribosomal protein L7/12, oligomerisation (N-terminal) domain"/>
    <property type="match status" value="1"/>
</dbReference>
<proteinExistence type="inferred from homology"/>
<accession>A4IJH9</accession>
<organism>
    <name type="scientific">Geobacillus thermodenitrificans (strain NG80-2)</name>
    <dbReference type="NCBI Taxonomy" id="420246"/>
    <lineage>
        <taxon>Bacteria</taxon>
        <taxon>Bacillati</taxon>
        <taxon>Bacillota</taxon>
        <taxon>Bacilli</taxon>
        <taxon>Bacillales</taxon>
        <taxon>Anoxybacillaceae</taxon>
        <taxon>Geobacillus</taxon>
    </lineage>
</organism>
<name>RL7_GEOTN</name>
<keyword id="KW-0687">Ribonucleoprotein</keyword>
<keyword id="KW-0689">Ribosomal protein</keyword>
<evidence type="ECO:0000255" key="1">
    <source>
        <dbReference type="HAMAP-Rule" id="MF_00368"/>
    </source>
</evidence>
<evidence type="ECO:0000305" key="2"/>
<gene>
    <name evidence="1" type="primary">rplL</name>
    <name type="ordered locus">GTNG_0096</name>
</gene>
<feature type="chain" id="PRO_1000007012" description="Large ribosomal subunit protein bL12">
    <location>
        <begin position="1"/>
        <end position="123"/>
    </location>
</feature>
<protein>
    <recommendedName>
        <fullName evidence="1">Large ribosomal subunit protein bL12</fullName>
    </recommendedName>
    <alternativeName>
        <fullName evidence="2">50S ribosomal protein L7/L12</fullName>
    </alternativeName>
</protein>
<comment type="function">
    <text evidence="1">Forms part of the ribosomal stalk which helps the ribosome interact with GTP-bound translation factors. Is thus essential for accurate translation.</text>
</comment>
<comment type="subunit">
    <text evidence="1">Homodimer. Part of the ribosomal stalk of the 50S ribosomal subunit. Forms a multimeric L10(L12)X complex, where L10 forms an elongated spine to which 2 to 4 L12 dimers bind in a sequential fashion. Binds GTP-bound translation factors.</text>
</comment>
<comment type="similarity">
    <text evidence="1">Belongs to the bacterial ribosomal protein bL12 family.</text>
</comment>
<sequence>MMTKEQIIEAVKNMTVLELNELVKAIEEEFGVTAAAPVVVAGGAAAGGEAAAEKTEFDVILADAGAQKIKVIKVVREITGLGLKEAKDLVDNTPKPLKEAVSKEEAEEIKAKLEEVGAKVEVK</sequence>